<gene>
    <name evidence="1" type="primary">rlmE</name>
    <name evidence="1" type="synonym">ftsJ</name>
    <name evidence="1" type="synonym">rrmJ</name>
    <name type="ordered locus">NE0527</name>
</gene>
<comment type="function">
    <text evidence="1">Specifically methylates the uridine in position 2552 of 23S rRNA at the 2'-O position of the ribose in the fully assembled 50S ribosomal subunit.</text>
</comment>
<comment type="catalytic activity">
    <reaction evidence="1">
        <text>uridine(2552) in 23S rRNA + S-adenosyl-L-methionine = 2'-O-methyluridine(2552) in 23S rRNA + S-adenosyl-L-homocysteine + H(+)</text>
        <dbReference type="Rhea" id="RHEA:42720"/>
        <dbReference type="Rhea" id="RHEA-COMP:10202"/>
        <dbReference type="Rhea" id="RHEA-COMP:10203"/>
        <dbReference type="ChEBI" id="CHEBI:15378"/>
        <dbReference type="ChEBI" id="CHEBI:57856"/>
        <dbReference type="ChEBI" id="CHEBI:59789"/>
        <dbReference type="ChEBI" id="CHEBI:65315"/>
        <dbReference type="ChEBI" id="CHEBI:74478"/>
        <dbReference type="EC" id="2.1.1.166"/>
    </reaction>
</comment>
<comment type="subcellular location">
    <subcellularLocation>
        <location evidence="1">Cytoplasm</location>
    </subcellularLocation>
</comment>
<comment type="similarity">
    <text evidence="1">Belongs to the class I-like SAM-binding methyltransferase superfamily. RNA methyltransferase RlmE family.</text>
</comment>
<accession>Q820A2</accession>
<keyword id="KW-0963">Cytoplasm</keyword>
<keyword id="KW-0489">Methyltransferase</keyword>
<keyword id="KW-1185">Reference proteome</keyword>
<keyword id="KW-0698">rRNA processing</keyword>
<keyword id="KW-0949">S-adenosyl-L-methionine</keyword>
<keyword id="KW-0808">Transferase</keyword>
<proteinExistence type="inferred from homology"/>
<protein>
    <recommendedName>
        <fullName evidence="1">Ribosomal RNA large subunit methyltransferase E</fullName>
        <ecNumber evidence="1">2.1.1.166</ecNumber>
    </recommendedName>
    <alternativeName>
        <fullName evidence="1">23S rRNA Um2552 methyltransferase</fullName>
    </alternativeName>
    <alternativeName>
        <fullName evidence="1">rRNA (uridine-2'-O-)-methyltransferase</fullName>
    </alternativeName>
</protein>
<reference key="1">
    <citation type="journal article" date="2003" name="J. Bacteriol.">
        <title>Complete genome sequence of the ammonia-oxidizing bacterium and obligate chemolithoautotroph Nitrosomonas europaea.</title>
        <authorList>
            <person name="Chain P."/>
            <person name="Lamerdin J.E."/>
            <person name="Larimer F.W."/>
            <person name="Regala W."/>
            <person name="Lao V."/>
            <person name="Land M.L."/>
            <person name="Hauser L."/>
            <person name="Hooper A.B."/>
            <person name="Klotz M.G."/>
            <person name="Norton J."/>
            <person name="Sayavedra-Soto L.A."/>
            <person name="Arciero D.M."/>
            <person name="Hommes N.G."/>
            <person name="Whittaker M.M."/>
            <person name="Arp D.J."/>
        </authorList>
    </citation>
    <scope>NUCLEOTIDE SEQUENCE [LARGE SCALE GENOMIC DNA]</scope>
    <source>
        <strain>ATCC 19718 / CIP 103999 / KCTC 2705 / NBRC 14298</strain>
    </source>
</reference>
<name>RLME_NITEU</name>
<feature type="chain" id="PRO_0000155515" description="Ribosomal RNA large subunit methyltransferase E">
    <location>
        <begin position="1"/>
        <end position="206"/>
    </location>
</feature>
<feature type="active site" description="Proton acceptor" evidence="1">
    <location>
        <position position="161"/>
    </location>
</feature>
<feature type="binding site" evidence="1">
    <location>
        <position position="60"/>
    </location>
    <ligand>
        <name>S-adenosyl-L-methionine</name>
        <dbReference type="ChEBI" id="CHEBI:59789"/>
    </ligand>
</feature>
<feature type="binding site" evidence="1">
    <location>
        <position position="62"/>
    </location>
    <ligand>
        <name>S-adenosyl-L-methionine</name>
        <dbReference type="ChEBI" id="CHEBI:59789"/>
    </ligand>
</feature>
<feature type="binding site" evidence="1">
    <location>
        <position position="80"/>
    </location>
    <ligand>
        <name>S-adenosyl-L-methionine</name>
        <dbReference type="ChEBI" id="CHEBI:59789"/>
    </ligand>
</feature>
<feature type="binding site" evidence="1">
    <location>
        <position position="96"/>
    </location>
    <ligand>
        <name>S-adenosyl-L-methionine</name>
        <dbReference type="ChEBI" id="CHEBI:59789"/>
    </ligand>
</feature>
<feature type="binding site" evidence="1">
    <location>
        <position position="121"/>
    </location>
    <ligand>
        <name>S-adenosyl-L-methionine</name>
        <dbReference type="ChEBI" id="CHEBI:59789"/>
    </ligand>
</feature>
<sequence>MKSARTSRAWIKAHINDNFVRKANHEGYRSRAAYKLREIAEHDALFVPGMTVVDLGAVPGSWSQVALESVGPTGKVFALDMLDMQPLPGMTFIQGDFRENEVLAMLEAALGGKRADLVISDMSPNLTGIRVSDQAQGMYLAELALIFCREHLNPGKNFLVKVFQGSDFEAFRQMMQTDFSKVVIRKPKASRDRSKELYLLGLEKII</sequence>
<organism>
    <name type="scientific">Nitrosomonas europaea (strain ATCC 19718 / CIP 103999 / KCTC 2705 / NBRC 14298)</name>
    <dbReference type="NCBI Taxonomy" id="228410"/>
    <lineage>
        <taxon>Bacteria</taxon>
        <taxon>Pseudomonadati</taxon>
        <taxon>Pseudomonadota</taxon>
        <taxon>Betaproteobacteria</taxon>
        <taxon>Nitrosomonadales</taxon>
        <taxon>Nitrosomonadaceae</taxon>
        <taxon>Nitrosomonas</taxon>
    </lineage>
</organism>
<evidence type="ECO:0000255" key="1">
    <source>
        <dbReference type="HAMAP-Rule" id="MF_01547"/>
    </source>
</evidence>
<dbReference type="EC" id="2.1.1.166" evidence="1"/>
<dbReference type="EMBL" id="AL954747">
    <property type="protein sequence ID" value="CAD84438.1"/>
    <property type="molecule type" value="Genomic_DNA"/>
</dbReference>
<dbReference type="RefSeq" id="WP_011111157.1">
    <property type="nucleotide sequence ID" value="NC_004757.1"/>
</dbReference>
<dbReference type="SMR" id="Q820A2"/>
<dbReference type="STRING" id="228410.NE0527"/>
<dbReference type="GeneID" id="87103730"/>
<dbReference type="KEGG" id="neu:NE0527"/>
<dbReference type="eggNOG" id="COG0293">
    <property type="taxonomic scope" value="Bacteria"/>
</dbReference>
<dbReference type="HOGENOM" id="CLU_009422_4_0_4"/>
<dbReference type="OrthoDB" id="9790080at2"/>
<dbReference type="PhylomeDB" id="Q820A2"/>
<dbReference type="Proteomes" id="UP000001416">
    <property type="component" value="Chromosome"/>
</dbReference>
<dbReference type="GO" id="GO:0005737">
    <property type="term" value="C:cytoplasm"/>
    <property type="evidence" value="ECO:0007669"/>
    <property type="project" value="UniProtKB-SubCell"/>
</dbReference>
<dbReference type="GO" id="GO:0008650">
    <property type="term" value="F:rRNA (uridine-2'-O-)-methyltransferase activity"/>
    <property type="evidence" value="ECO:0007669"/>
    <property type="project" value="UniProtKB-UniRule"/>
</dbReference>
<dbReference type="FunFam" id="3.40.50.150:FF:000005">
    <property type="entry name" value="Ribosomal RNA large subunit methyltransferase E"/>
    <property type="match status" value="1"/>
</dbReference>
<dbReference type="Gene3D" id="3.40.50.150">
    <property type="entry name" value="Vaccinia Virus protein VP39"/>
    <property type="match status" value="1"/>
</dbReference>
<dbReference type="HAMAP" id="MF_01547">
    <property type="entry name" value="RNA_methyltr_E"/>
    <property type="match status" value="1"/>
</dbReference>
<dbReference type="InterPro" id="IPR050082">
    <property type="entry name" value="RNA_methyltr_RlmE"/>
</dbReference>
<dbReference type="InterPro" id="IPR002877">
    <property type="entry name" value="RNA_MeTrfase_FtsJ_dom"/>
</dbReference>
<dbReference type="InterPro" id="IPR015507">
    <property type="entry name" value="rRNA-MeTfrase_E"/>
</dbReference>
<dbReference type="InterPro" id="IPR029063">
    <property type="entry name" value="SAM-dependent_MTases_sf"/>
</dbReference>
<dbReference type="PANTHER" id="PTHR10920">
    <property type="entry name" value="RIBOSOMAL RNA METHYLTRANSFERASE"/>
    <property type="match status" value="1"/>
</dbReference>
<dbReference type="PANTHER" id="PTHR10920:SF18">
    <property type="entry name" value="RRNA METHYLTRANSFERASE 2, MITOCHONDRIAL"/>
    <property type="match status" value="1"/>
</dbReference>
<dbReference type="Pfam" id="PF01728">
    <property type="entry name" value="FtsJ"/>
    <property type="match status" value="1"/>
</dbReference>
<dbReference type="PIRSF" id="PIRSF005461">
    <property type="entry name" value="23S_rRNA_mtase"/>
    <property type="match status" value="1"/>
</dbReference>
<dbReference type="SUPFAM" id="SSF53335">
    <property type="entry name" value="S-adenosyl-L-methionine-dependent methyltransferases"/>
    <property type="match status" value="1"/>
</dbReference>